<gene>
    <name type="primary">AKR1</name>
    <name type="ordered locus">YALI0E21780g</name>
</gene>
<name>AKR1_YARLI</name>
<proteinExistence type="inferred from homology"/>
<feature type="chain" id="PRO_0000212933" description="Palmitoyltransferase AKR1">
    <location>
        <begin position="1"/>
        <end position="702"/>
    </location>
</feature>
<feature type="topological domain" description="Cytoplasmic" evidence="2">
    <location>
        <begin position="1"/>
        <end position="299"/>
    </location>
</feature>
<feature type="transmembrane region" description="Helical" evidence="2">
    <location>
        <begin position="300"/>
        <end position="320"/>
    </location>
</feature>
<feature type="transmembrane region" description="Helical" evidence="2">
    <location>
        <begin position="321"/>
        <end position="341"/>
    </location>
</feature>
<feature type="topological domain" description="Cytoplasmic" evidence="2">
    <location>
        <begin position="342"/>
        <end position="354"/>
    </location>
</feature>
<feature type="transmembrane region" description="Helical" evidence="2">
    <location>
        <begin position="355"/>
        <end position="375"/>
    </location>
</feature>
<feature type="topological domain" description="Lumenal" evidence="2">
    <location>
        <begin position="376"/>
        <end position="379"/>
    </location>
</feature>
<feature type="transmembrane region" description="Helical" evidence="2">
    <location>
        <begin position="380"/>
        <end position="400"/>
    </location>
</feature>
<feature type="topological domain" description="Cytoplasmic" evidence="2">
    <location>
        <begin position="401"/>
        <end position="479"/>
    </location>
</feature>
<feature type="transmembrane region" description="Helical" evidence="2">
    <location>
        <begin position="480"/>
        <end position="500"/>
    </location>
</feature>
<feature type="topological domain" description="Lumenal" evidence="2">
    <location>
        <begin position="501"/>
        <end position="518"/>
    </location>
</feature>
<feature type="transmembrane region" description="Helical" evidence="2">
    <location>
        <begin position="519"/>
        <end position="539"/>
    </location>
</feature>
<feature type="topological domain" description="Cytoplasmic" evidence="2">
    <location>
        <begin position="540"/>
        <end position="702"/>
    </location>
</feature>
<feature type="repeat" description="ANK 1">
    <location>
        <begin position="49"/>
        <end position="80"/>
    </location>
</feature>
<feature type="repeat" description="ANK 2">
    <location>
        <begin position="83"/>
        <end position="112"/>
    </location>
</feature>
<feature type="repeat" description="ANK 3">
    <location>
        <begin position="117"/>
        <end position="147"/>
    </location>
</feature>
<feature type="repeat" description="ANK 4">
    <location>
        <begin position="150"/>
        <end position="179"/>
    </location>
</feature>
<feature type="repeat" description="ANK 5">
    <location>
        <begin position="183"/>
        <end position="212"/>
    </location>
</feature>
<feature type="repeat" description="ANK 6">
    <location>
        <begin position="216"/>
        <end position="245"/>
    </location>
</feature>
<feature type="domain" description="DHHC" evidence="3">
    <location>
        <begin position="436"/>
        <end position="486"/>
    </location>
</feature>
<feature type="region of interest" description="Disordered" evidence="4">
    <location>
        <begin position="1"/>
        <end position="51"/>
    </location>
</feature>
<feature type="region of interest" description="Disordered" evidence="4">
    <location>
        <begin position="679"/>
        <end position="702"/>
    </location>
</feature>
<feature type="compositionally biased region" description="Polar residues" evidence="4">
    <location>
        <begin position="1"/>
        <end position="40"/>
    </location>
</feature>
<feature type="active site" description="S-palmitoyl cysteine intermediate" evidence="1">
    <location>
        <position position="466"/>
    </location>
</feature>
<organism>
    <name type="scientific">Yarrowia lipolytica (strain CLIB 122 / E 150)</name>
    <name type="common">Yeast</name>
    <name type="synonym">Candida lipolytica</name>
    <dbReference type="NCBI Taxonomy" id="284591"/>
    <lineage>
        <taxon>Eukaryota</taxon>
        <taxon>Fungi</taxon>
        <taxon>Dikarya</taxon>
        <taxon>Ascomycota</taxon>
        <taxon>Saccharomycotina</taxon>
        <taxon>Dipodascomycetes</taxon>
        <taxon>Dipodascales</taxon>
        <taxon>Dipodascales incertae sedis</taxon>
        <taxon>Yarrowia</taxon>
    </lineage>
</organism>
<keyword id="KW-0012">Acyltransferase</keyword>
<keyword id="KW-0040">ANK repeat</keyword>
<keyword id="KW-0967">Endosome</keyword>
<keyword id="KW-0333">Golgi apparatus</keyword>
<keyword id="KW-0449">Lipoprotein</keyword>
<keyword id="KW-0472">Membrane</keyword>
<keyword id="KW-0564">Palmitate</keyword>
<keyword id="KW-1185">Reference proteome</keyword>
<keyword id="KW-0677">Repeat</keyword>
<keyword id="KW-0808">Transferase</keyword>
<keyword id="KW-0812">Transmembrane</keyword>
<keyword id="KW-1133">Transmembrane helix</keyword>
<evidence type="ECO:0000250" key="1"/>
<evidence type="ECO:0000255" key="2"/>
<evidence type="ECO:0000255" key="3">
    <source>
        <dbReference type="PROSITE-ProRule" id="PRU00067"/>
    </source>
</evidence>
<evidence type="ECO:0000256" key="4">
    <source>
        <dbReference type="SAM" id="MobiDB-lite"/>
    </source>
</evidence>
<evidence type="ECO:0000305" key="5"/>
<dbReference type="EC" id="2.3.1.225"/>
<dbReference type="EMBL" id="CR382131">
    <property type="protein sequence ID" value="CAG79837.1"/>
    <property type="molecule type" value="Genomic_DNA"/>
</dbReference>
<dbReference type="RefSeq" id="XP_504242.1">
    <property type="nucleotide sequence ID" value="XM_504242.1"/>
</dbReference>
<dbReference type="SMR" id="Q6C520"/>
<dbReference type="FunCoup" id="Q6C520">
    <property type="interactions" value="632"/>
</dbReference>
<dbReference type="STRING" id="284591.Q6C520"/>
<dbReference type="EnsemblFungi" id="CAG79837">
    <property type="protein sequence ID" value="CAG79837"/>
    <property type="gene ID" value="YALI0_E21780g"/>
</dbReference>
<dbReference type="KEGG" id="yli:2911956"/>
<dbReference type="VEuPathDB" id="FungiDB:YALI0_E21780g"/>
<dbReference type="HOGENOM" id="CLU_012510_1_0_1"/>
<dbReference type="InParanoid" id="Q6C520"/>
<dbReference type="OMA" id="FWVGFRY"/>
<dbReference type="OrthoDB" id="6497at4891"/>
<dbReference type="Proteomes" id="UP000001300">
    <property type="component" value="Chromosome E"/>
</dbReference>
<dbReference type="GO" id="GO:0031901">
    <property type="term" value="C:early endosome membrane"/>
    <property type="evidence" value="ECO:0007669"/>
    <property type="project" value="UniProtKB-SubCell"/>
</dbReference>
<dbReference type="GO" id="GO:0000139">
    <property type="term" value="C:Golgi membrane"/>
    <property type="evidence" value="ECO:0007669"/>
    <property type="project" value="UniProtKB-SubCell"/>
</dbReference>
<dbReference type="GO" id="GO:0019706">
    <property type="term" value="F:protein-cysteine S-palmitoyltransferase activity"/>
    <property type="evidence" value="ECO:0007669"/>
    <property type="project" value="UniProtKB-EC"/>
</dbReference>
<dbReference type="Gene3D" id="1.25.40.20">
    <property type="entry name" value="Ankyrin repeat-containing domain"/>
    <property type="match status" value="1"/>
</dbReference>
<dbReference type="InterPro" id="IPR002110">
    <property type="entry name" value="Ankyrin_rpt"/>
</dbReference>
<dbReference type="InterPro" id="IPR036770">
    <property type="entry name" value="Ankyrin_rpt-contain_sf"/>
</dbReference>
<dbReference type="InterPro" id="IPR001594">
    <property type="entry name" value="Palmitoyltrfase_DHHC"/>
</dbReference>
<dbReference type="PANTHER" id="PTHR24161">
    <property type="entry name" value="ANK_REP_REGION DOMAIN-CONTAINING PROTEIN-RELATED"/>
    <property type="match status" value="1"/>
</dbReference>
<dbReference type="PANTHER" id="PTHR24161:SF85">
    <property type="entry name" value="PALMITOYLTRANSFERASE HIP14"/>
    <property type="match status" value="1"/>
</dbReference>
<dbReference type="Pfam" id="PF00023">
    <property type="entry name" value="Ank"/>
    <property type="match status" value="1"/>
</dbReference>
<dbReference type="Pfam" id="PF12796">
    <property type="entry name" value="Ank_2"/>
    <property type="match status" value="2"/>
</dbReference>
<dbReference type="Pfam" id="PF01529">
    <property type="entry name" value="DHHC"/>
    <property type="match status" value="1"/>
</dbReference>
<dbReference type="SMART" id="SM00248">
    <property type="entry name" value="ANK"/>
    <property type="match status" value="6"/>
</dbReference>
<dbReference type="SUPFAM" id="SSF48403">
    <property type="entry name" value="Ankyrin repeat"/>
    <property type="match status" value="1"/>
</dbReference>
<dbReference type="PROSITE" id="PS50297">
    <property type="entry name" value="ANK_REP_REGION"/>
    <property type="match status" value="1"/>
</dbReference>
<dbReference type="PROSITE" id="PS50088">
    <property type="entry name" value="ANK_REPEAT"/>
    <property type="match status" value="5"/>
</dbReference>
<dbReference type="PROSITE" id="PS50216">
    <property type="entry name" value="DHHC"/>
    <property type="match status" value="1"/>
</dbReference>
<accession>Q6C520</accession>
<sequence length="702" mass="77430">MSTDAELQTISGLSVASKSAPSTQTEGVTASGKVESTTNAEEATSDVEEEENPLVVAARDGNTAEVKRLCESGSYSVLDTAEDGVTALHWAAVNNRISTCQYLVEQGAVVDAKGGQLNGTPLHWACRRGLVYIVHYLIQNGADPLRSDVQGYNALHLATHSSNVMLLVYLLHQGLPVDCQDPNGRTALHWAAYQGDALSVDVLLRWGSDVKITDTQGFLPLHWGIVNGSRNSLARLIEEGSDMYAKSSDGKTPHVMAAEMNTTAQLEGALDDCGRFPDGSQKTKYFDARTTNLLCFFTPFILILLGLVLCTFCGPIFGIILTVATLFGSIKLLKTLVLPSLYNGHAALLKSPFQAGIFTGSAFWVTVKYLTSVLPATFASHPILNFFFASIFGLAMYCFFRCMSMDPGYIPKLSGITEQKEVIETLIERGEFDTRHFCFVTYVRKPLRSKFCRQSKRVVARFDHFCPWVWNAIGVRNHRMFVLYVLFLQIGIPLWLALNSAYFGELLEIKRWDPLEFYLVIWISLQLIWITFLSFVQIFQICRSLTTSEAVNLQKYGYMGADDYSSVPLDHSAATASAKSVMNAHGHAAKSPCFSSVLKLLGVDQFVATAGEAIKHRDNRSWKEKNPTDSGAGTNCFDFWFPNGKFDLLAVFEAGKGGGAIGGHAVDYYKLWDFPDVSPNQQQTNNRSTREDGEALLAESQV</sequence>
<comment type="function">
    <text evidence="1">Palmitoyltransferase specific for casein kinase 1.</text>
</comment>
<comment type="catalytic activity">
    <reaction>
        <text>L-cysteinyl-[protein] + hexadecanoyl-CoA = S-hexadecanoyl-L-cysteinyl-[protein] + CoA</text>
        <dbReference type="Rhea" id="RHEA:36683"/>
        <dbReference type="Rhea" id="RHEA-COMP:10131"/>
        <dbReference type="Rhea" id="RHEA-COMP:11032"/>
        <dbReference type="ChEBI" id="CHEBI:29950"/>
        <dbReference type="ChEBI" id="CHEBI:57287"/>
        <dbReference type="ChEBI" id="CHEBI:57379"/>
        <dbReference type="ChEBI" id="CHEBI:74151"/>
        <dbReference type="EC" id="2.3.1.225"/>
    </reaction>
</comment>
<comment type="subcellular location">
    <subcellularLocation>
        <location>Early endosome membrane</location>
        <topology>Multi-pass membrane protein</topology>
    </subcellularLocation>
    <subcellularLocation>
        <location evidence="1">Golgi apparatus membrane</location>
        <topology evidence="1">Multi-pass membrane protein</topology>
    </subcellularLocation>
</comment>
<comment type="domain">
    <text evidence="1">The DHHC domain is required for palmitoyltransferase activity.</text>
</comment>
<comment type="similarity">
    <text evidence="5">Belongs to the DHHC palmitoyltransferase family. AKR/ZDHHC17 subfamily.</text>
</comment>
<reference key="1">
    <citation type="journal article" date="2004" name="Nature">
        <title>Genome evolution in yeasts.</title>
        <authorList>
            <person name="Dujon B."/>
            <person name="Sherman D."/>
            <person name="Fischer G."/>
            <person name="Durrens P."/>
            <person name="Casaregola S."/>
            <person name="Lafontaine I."/>
            <person name="de Montigny J."/>
            <person name="Marck C."/>
            <person name="Neuveglise C."/>
            <person name="Talla E."/>
            <person name="Goffard N."/>
            <person name="Frangeul L."/>
            <person name="Aigle M."/>
            <person name="Anthouard V."/>
            <person name="Babour A."/>
            <person name="Barbe V."/>
            <person name="Barnay S."/>
            <person name="Blanchin S."/>
            <person name="Beckerich J.-M."/>
            <person name="Beyne E."/>
            <person name="Bleykasten C."/>
            <person name="Boisrame A."/>
            <person name="Boyer J."/>
            <person name="Cattolico L."/>
            <person name="Confanioleri F."/>
            <person name="de Daruvar A."/>
            <person name="Despons L."/>
            <person name="Fabre E."/>
            <person name="Fairhead C."/>
            <person name="Ferry-Dumazet H."/>
            <person name="Groppi A."/>
            <person name="Hantraye F."/>
            <person name="Hennequin C."/>
            <person name="Jauniaux N."/>
            <person name="Joyet P."/>
            <person name="Kachouri R."/>
            <person name="Kerrest A."/>
            <person name="Koszul R."/>
            <person name="Lemaire M."/>
            <person name="Lesur I."/>
            <person name="Ma L."/>
            <person name="Muller H."/>
            <person name="Nicaud J.-M."/>
            <person name="Nikolski M."/>
            <person name="Oztas S."/>
            <person name="Ozier-Kalogeropoulos O."/>
            <person name="Pellenz S."/>
            <person name="Potier S."/>
            <person name="Richard G.-F."/>
            <person name="Straub M.-L."/>
            <person name="Suleau A."/>
            <person name="Swennen D."/>
            <person name="Tekaia F."/>
            <person name="Wesolowski-Louvel M."/>
            <person name="Westhof E."/>
            <person name="Wirth B."/>
            <person name="Zeniou-Meyer M."/>
            <person name="Zivanovic Y."/>
            <person name="Bolotin-Fukuhara M."/>
            <person name="Thierry A."/>
            <person name="Bouchier C."/>
            <person name="Caudron B."/>
            <person name="Scarpelli C."/>
            <person name="Gaillardin C."/>
            <person name="Weissenbach J."/>
            <person name="Wincker P."/>
            <person name="Souciet J.-L."/>
        </authorList>
    </citation>
    <scope>NUCLEOTIDE SEQUENCE [LARGE SCALE GENOMIC DNA]</scope>
    <source>
        <strain>CLIB 122 / E 150</strain>
    </source>
</reference>
<protein>
    <recommendedName>
        <fullName>Palmitoyltransferase AKR1</fullName>
        <ecNumber>2.3.1.225</ecNumber>
    </recommendedName>
    <alternativeName>
        <fullName>Ankyrin repeat-containing protein AKR1</fullName>
    </alternativeName>
</protein>